<dbReference type="EMBL" id="BC047175">
    <property type="protein sequence ID" value="AAH47175.1"/>
    <property type="status" value="ALT_SEQ"/>
    <property type="molecule type" value="mRNA"/>
</dbReference>
<dbReference type="EMBL" id="BC067172">
    <property type="protein sequence ID" value="AAH67172.1"/>
    <property type="molecule type" value="mRNA"/>
</dbReference>
<dbReference type="RefSeq" id="NP_997764.1">
    <property type="nucleotide sequence ID" value="NM_212599.1"/>
</dbReference>
<dbReference type="SMR" id="Q6NXA4"/>
<dbReference type="FunCoup" id="Q6NXA4">
    <property type="interactions" value="2109"/>
</dbReference>
<dbReference type="STRING" id="7955.ENSDARP00000140809"/>
<dbReference type="iPTMnet" id="Q6NXA4"/>
<dbReference type="PaxDb" id="7955-ENSDARP00000019087"/>
<dbReference type="GeneID" id="321868"/>
<dbReference type="KEGG" id="dre:321868"/>
<dbReference type="AGR" id="ZFIN:ZDB-GENE-030131-587"/>
<dbReference type="CTD" id="321868"/>
<dbReference type="ZFIN" id="ZDB-GENE-030131-587">
    <property type="gene designation" value="ilf3b"/>
</dbReference>
<dbReference type="eggNOG" id="KOG3792">
    <property type="taxonomic scope" value="Eukaryota"/>
</dbReference>
<dbReference type="InParanoid" id="Q6NXA4"/>
<dbReference type="OrthoDB" id="8898434at2759"/>
<dbReference type="PhylomeDB" id="Q6NXA4"/>
<dbReference type="PRO" id="PR:Q6NXA4"/>
<dbReference type="Proteomes" id="UP000000437">
    <property type="component" value="Chromosome 3"/>
</dbReference>
<dbReference type="GO" id="GO:0005737">
    <property type="term" value="C:cytoplasm"/>
    <property type="evidence" value="ECO:0007669"/>
    <property type="project" value="UniProtKB-SubCell"/>
</dbReference>
<dbReference type="GO" id="GO:0005730">
    <property type="term" value="C:nucleolus"/>
    <property type="evidence" value="ECO:0007669"/>
    <property type="project" value="UniProtKB-SubCell"/>
</dbReference>
<dbReference type="GO" id="GO:0003677">
    <property type="term" value="F:DNA binding"/>
    <property type="evidence" value="ECO:0007669"/>
    <property type="project" value="UniProtKB-KW"/>
</dbReference>
<dbReference type="GO" id="GO:0003725">
    <property type="term" value="F:double-stranded RNA binding"/>
    <property type="evidence" value="ECO:0000318"/>
    <property type="project" value="GO_Central"/>
</dbReference>
<dbReference type="GO" id="GO:0035925">
    <property type="term" value="F:mRNA 3'-UTR AU-rich region binding"/>
    <property type="evidence" value="ECO:0000250"/>
    <property type="project" value="UniProtKB"/>
</dbReference>
<dbReference type="GO" id="GO:0003727">
    <property type="term" value="F:single-stranded RNA binding"/>
    <property type="evidence" value="ECO:0000318"/>
    <property type="project" value="GO_Central"/>
</dbReference>
<dbReference type="GO" id="GO:0051607">
    <property type="term" value="P:defense response to virus"/>
    <property type="evidence" value="ECO:0007669"/>
    <property type="project" value="UniProtKB-KW"/>
</dbReference>
<dbReference type="GO" id="GO:0160091">
    <property type="term" value="P:spliceosome-depend formation of circular RNA"/>
    <property type="evidence" value="ECO:0000250"/>
    <property type="project" value="UniProtKB"/>
</dbReference>
<dbReference type="CDD" id="cd19910">
    <property type="entry name" value="DSRM_ILF3_rpt1"/>
    <property type="match status" value="1"/>
</dbReference>
<dbReference type="CDD" id="cd19912">
    <property type="entry name" value="DSRM_ILF3_rpt2"/>
    <property type="match status" value="1"/>
</dbReference>
<dbReference type="FunFam" id="1.10.1410.40:FF:000001">
    <property type="entry name" value="interleukin enhancer-binding factor 3 isoform X1"/>
    <property type="match status" value="1"/>
</dbReference>
<dbReference type="FunFam" id="3.30.160.20:FF:000006">
    <property type="entry name" value="interleukin enhancer-binding factor 3 isoform X2"/>
    <property type="match status" value="1"/>
</dbReference>
<dbReference type="FunFam" id="3.30.160.20:FF:000008">
    <property type="entry name" value="interleukin enhancer-binding factor 3 isoform X2"/>
    <property type="match status" value="1"/>
</dbReference>
<dbReference type="FunFam" id="3.30.460.10:FF:000003">
    <property type="entry name" value="interleukin enhancer-binding factor 3 isoform X2"/>
    <property type="match status" value="1"/>
</dbReference>
<dbReference type="Gene3D" id="1.10.1410.40">
    <property type="match status" value="1"/>
</dbReference>
<dbReference type="Gene3D" id="3.30.160.20">
    <property type="match status" value="2"/>
</dbReference>
<dbReference type="Gene3D" id="3.30.460.10">
    <property type="entry name" value="Beta Polymerase, domain 2"/>
    <property type="match status" value="1"/>
</dbReference>
<dbReference type="InterPro" id="IPR014720">
    <property type="entry name" value="dsRBD_dom"/>
</dbReference>
<dbReference type="InterPro" id="IPR033099">
    <property type="entry name" value="DSRM1_ILF3"/>
</dbReference>
<dbReference type="InterPro" id="IPR006561">
    <property type="entry name" value="DZF_dom"/>
</dbReference>
<dbReference type="InterPro" id="IPR049402">
    <property type="entry name" value="DZF_dom_C"/>
</dbReference>
<dbReference type="InterPro" id="IPR049401">
    <property type="entry name" value="DZF_dom_N"/>
</dbReference>
<dbReference type="InterPro" id="IPR043519">
    <property type="entry name" value="NT_sf"/>
</dbReference>
<dbReference type="PANTHER" id="PTHR45762:SF4">
    <property type="entry name" value="INTERLEUKIN ENHANCER-BINDING FACTOR 3"/>
    <property type="match status" value="1"/>
</dbReference>
<dbReference type="PANTHER" id="PTHR45762">
    <property type="entry name" value="ZINC FINGER RNA-BINDING PROTEIN"/>
    <property type="match status" value="1"/>
</dbReference>
<dbReference type="Pfam" id="PF00035">
    <property type="entry name" value="dsrm"/>
    <property type="match status" value="2"/>
</dbReference>
<dbReference type="Pfam" id="PF20965">
    <property type="entry name" value="DZF_C"/>
    <property type="match status" value="1"/>
</dbReference>
<dbReference type="Pfam" id="PF07528">
    <property type="entry name" value="DZF_N"/>
    <property type="match status" value="1"/>
</dbReference>
<dbReference type="SMART" id="SM00358">
    <property type="entry name" value="DSRM"/>
    <property type="match status" value="2"/>
</dbReference>
<dbReference type="SMART" id="SM00572">
    <property type="entry name" value="DZF"/>
    <property type="match status" value="1"/>
</dbReference>
<dbReference type="SUPFAM" id="SSF54768">
    <property type="entry name" value="dsRNA-binding domain-like"/>
    <property type="match status" value="2"/>
</dbReference>
<dbReference type="PROSITE" id="PS50137">
    <property type="entry name" value="DS_RBD"/>
    <property type="match status" value="2"/>
</dbReference>
<dbReference type="PROSITE" id="PS51703">
    <property type="entry name" value="DZF"/>
    <property type="match status" value="1"/>
</dbReference>
<gene>
    <name type="primary">ilf3</name>
    <name type="ORF">zgc:77030</name>
</gene>
<sequence>MPPPLRHRSMRIFVNDDRHVMAKHSAIYPTQEELEGVQNMVSHTERALKLVSDWLDDQEKGNAKVNALDTDGEGDKETEPSTGEQATRSLRGVMRVGLVAKGLLLKGDLDLELVLLCKEKPTITLLKKVSDNLAVQLKQLVTEEKYDVKPCIRDATIVIKNAKEPPLTLTIHLTSPLVREEVEKQAAGETLSVIDPPDVLDRQKCLTALASLRHAKWFQARANGLRSCVIVIRILRDLCARVPTWSPLRGWPLELLCEKAIGTGNRPMGAGEALRRVLECLASGILMADGSGICDPCEKELTDAISHVDRQQREDITQSAQHALRLSAFGQLHKVLGMDPLPSKMPRKPRSDTPIDYTVQIPPSTTYVPPMKRPIEEESTDEKNPNKKKKKLQKKSPDEKAEPAQAMNALMRLNQLKPGLQYKLISQTGPVHVPVFTMSVEVDGKNFEASGPSKRTAKLHVAVKVLQDMGLPTGMDQKTTELMKVDEPVSTQETLPPVIKMEPEPVPITETPTDENARQQGPILTKHGKNPVMELNEKRRGLKYELISETGGSHDKRFVMEVEIDGQKFQGTGSNKKVAKAYAALAALEKLFPEGSNSEVNKKKKMPPMHTGFGMVSGPPSDMMPNPRGRGRGRGRGRGRGFNNGGGFNQGGYGTYGYGGNNSGYNFYNNGGSNGGSVASNQGTNQSSGGAAATGGFGSYYQSDSSYTSPAPTPKPVGKKPPMHQNTKPQAPGVGQGGSYGQYNQGYGQKKNFGQTQGGGGAAAGGGGNFNYSTAYPSQVTGGQEYNYEGYSNQSNYNSQGGANQNFGGNSAPYNSGQAGYGRGDPNMNYQYR</sequence>
<name>ILF3_DANRE</name>
<accession>Q6NXA4</accession>
<accession>Q802W3</accession>
<comment type="function">
    <text evidence="1">RNA-binding protein that plays an essential role in the biogenesis of circular RNAs (circRNAs) which are produced by back-splicing circularization of pre-mRNAs. Within the nucleus, promotes circRNAs processing by stabilizing the regulatory elements residing in the flanking introns of the circularized exons. Plays thereby a role in the back-splicing of a subset of circRNAs. As a consequence, participates in a wide range of transcriptional and post-transcriptional processes. Binds to poly-U elements and AU-rich elements (AREs) in the 3'-UTR of target mRNAs (By similarity). Upon viral infection, ILF3 accumulates in the cytoplasm and participates in the innate antiviral response. Mechanistically, ILF3 becomes phosphorylated and activated by the double-stranded RNA-activated protein kinase/PKR which releases ILF3 from cellular mature circRNAs. In turn, unbound ILF3 molecules are able to interact with and thus inhibit viral mRNAs.</text>
</comment>
<comment type="subcellular location">
    <subcellularLocation>
        <location evidence="1">Nucleus</location>
        <location evidence="1">Nucleolus</location>
    </subcellularLocation>
    <subcellularLocation>
        <location evidence="1">Cytoplasm</location>
    </subcellularLocation>
    <subcellularLocation>
        <location evidence="1">Nucleus</location>
    </subcellularLocation>
</comment>
<comment type="sequence caution" evidence="6">
    <conflict type="miscellaneous discrepancy">
        <sequence resource="EMBL-CDS" id="AAH47175"/>
    </conflict>
    <text>Contaminating sequence. Potential poly-A sequence.</text>
</comment>
<organism>
    <name type="scientific">Danio rerio</name>
    <name type="common">Zebrafish</name>
    <name type="synonym">Brachydanio rerio</name>
    <dbReference type="NCBI Taxonomy" id="7955"/>
    <lineage>
        <taxon>Eukaryota</taxon>
        <taxon>Metazoa</taxon>
        <taxon>Chordata</taxon>
        <taxon>Craniata</taxon>
        <taxon>Vertebrata</taxon>
        <taxon>Euteleostomi</taxon>
        <taxon>Actinopterygii</taxon>
        <taxon>Neopterygii</taxon>
        <taxon>Teleostei</taxon>
        <taxon>Ostariophysi</taxon>
        <taxon>Cypriniformes</taxon>
        <taxon>Danionidae</taxon>
        <taxon>Danioninae</taxon>
        <taxon>Danio</taxon>
    </lineage>
</organism>
<proteinExistence type="evidence at protein level"/>
<keyword id="KW-0051">Antiviral defense</keyword>
<keyword id="KW-0963">Cytoplasm</keyword>
<keyword id="KW-0238">DNA-binding</keyword>
<keyword id="KW-0539">Nucleus</keyword>
<keyword id="KW-0597">Phosphoprotein</keyword>
<keyword id="KW-1185">Reference proteome</keyword>
<keyword id="KW-0677">Repeat</keyword>
<keyword id="KW-0694">RNA-binding</keyword>
<keyword id="KW-0804">Transcription</keyword>
<keyword id="KW-0805">Transcription regulation</keyword>
<reference key="1">
    <citation type="submission" date="2004-03" db="EMBL/GenBank/DDBJ databases">
        <authorList>
            <consortium name="NIH - Zebrafish Gene Collection (ZGC) project"/>
        </authorList>
    </citation>
    <scope>NUCLEOTIDE SEQUENCE [LARGE SCALE MRNA]</scope>
    <source>
        <tissue>Kidney</tissue>
    </source>
</reference>
<reference key="2">
    <citation type="journal article" date="2008" name="J. Proteome Res.">
        <title>Online automated in vivo zebrafish phosphoproteomics: from large-scale analysis down to a single embryo.</title>
        <authorList>
            <person name="Lemeer S."/>
            <person name="Pinkse M.W.H."/>
            <person name="Mohammed S."/>
            <person name="van Breukelen B."/>
            <person name="den Hertog J."/>
            <person name="Slijper M."/>
            <person name="Heck A.J.R."/>
        </authorList>
    </citation>
    <scope>PHOSPHORYLATION [LARGE SCALE ANALYSIS] AT THR-70</scope>
    <scope>IDENTIFICATION BY MASS SPECTROMETRY</scope>
    <source>
        <tissue>Embryo</tissue>
    </source>
</reference>
<feature type="chain" id="PRO_0000126073" description="Interleukin enhancer-binding factor 3 homolog">
    <location>
        <begin position="1"/>
        <end position="833"/>
    </location>
</feature>
<feature type="domain" description="DZF" evidence="3">
    <location>
        <begin position="11"/>
        <end position="379"/>
    </location>
</feature>
<feature type="domain" description="DRBM 1" evidence="2">
    <location>
        <begin position="402"/>
        <end position="471"/>
    </location>
</feature>
<feature type="domain" description="DRBM 2" evidence="2">
    <location>
        <begin position="527"/>
        <end position="593"/>
    </location>
</feature>
<feature type="region of interest" description="Disordered" evidence="4">
    <location>
        <begin position="65"/>
        <end position="86"/>
    </location>
</feature>
<feature type="region of interest" description="Disordered" evidence="4">
    <location>
        <begin position="339"/>
        <end position="403"/>
    </location>
</feature>
<feature type="region of interest" description="Disordered" evidence="4">
    <location>
        <begin position="597"/>
        <end position="651"/>
    </location>
</feature>
<feature type="region of interest" description="Disordered" evidence="4">
    <location>
        <begin position="702"/>
        <end position="762"/>
    </location>
</feature>
<feature type="region of interest" description="Disordered" evidence="4">
    <location>
        <begin position="775"/>
        <end position="833"/>
    </location>
</feature>
<feature type="compositionally biased region" description="Basic and acidic residues" evidence="4">
    <location>
        <begin position="373"/>
        <end position="385"/>
    </location>
</feature>
<feature type="compositionally biased region" description="Basic residues" evidence="4">
    <location>
        <begin position="629"/>
        <end position="639"/>
    </location>
</feature>
<feature type="compositionally biased region" description="Gly residues" evidence="4">
    <location>
        <begin position="640"/>
        <end position="651"/>
    </location>
</feature>
<feature type="compositionally biased region" description="Polar residues" evidence="4">
    <location>
        <begin position="775"/>
        <end position="818"/>
    </location>
</feature>
<feature type="modified residue" description="Phosphothreonine" evidence="5">
    <location>
        <position position="70"/>
    </location>
</feature>
<feature type="sequence conflict" description="In Ref. 1; AAH47175." evidence="6" ref="1">
    <original>F</original>
    <variation>Y</variation>
    <location>
        <position position="218"/>
    </location>
</feature>
<feature type="sequence conflict" description="In Ref. 1; AAH47175." evidence="6" ref="1">
    <original>G</original>
    <variation>V</variation>
    <location>
        <position position="262"/>
    </location>
</feature>
<feature type="sequence conflict" description="In Ref. 1; AAH67172." evidence="6" ref="1">
    <original>T</original>
    <variation>A</variation>
    <location>
        <position position="491"/>
    </location>
</feature>
<protein>
    <recommendedName>
        <fullName>Interleukin enhancer-binding factor 3 homolog</fullName>
    </recommendedName>
</protein>
<evidence type="ECO:0000250" key="1">
    <source>
        <dbReference type="UniProtKB" id="Q12906"/>
    </source>
</evidence>
<evidence type="ECO:0000255" key="2">
    <source>
        <dbReference type="PROSITE-ProRule" id="PRU00266"/>
    </source>
</evidence>
<evidence type="ECO:0000255" key="3">
    <source>
        <dbReference type="PROSITE-ProRule" id="PRU01040"/>
    </source>
</evidence>
<evidence type="ECO:0000256" key="4">
    <source>
        <dbReference type="SAM" id="MobiDB-lite"/>
    </source>
</evidence>
<evidence type="ECO:0000269" key="5">
    <source>
    </source>
</evidence>
<evidence type="ECO:0000305" key="6"/>